<reference key="1">
    <citation type="journal article" date="1983" name="J. Biol. Chem.">
        <title>Biosynthesis of bacterial glycogen. Primary structure of Escherichia coli ADP-glucose synthetase as deduced from the nucleotide sequence of the glg C gene.</title>
        <authorList>
            <person name="Baecker P.A."/>
            <person name="Furlong C.E."/>
            <person name="Preiss J."/>
        </authorList>
    </citation>
    <scope>NUCLEOTIDE SEQUENCE [GENOMIC DNA]</scope>
    <source>
        <strain>K12</strain>
    </source>
</reference>
<reference key="2">
    <citation type="journal article" date="1992" name="Arch. Biochem. Biophys.">
        <title>Cloning, expression, and nucleotide sequence of glgC gene from an allosteric mutant of Escherichia coli B.</title>
        <authorList>
            <person name="Ghosh P."/>
            <person name="Meyer C."/>
            <person name="Remy E."/>
            <person name="Peterson D."/>
            <person name="Preiss J."/>
        </authorList>
    </citation>
    <scope>NUCLEOTIDE SEQUENCE [GENOMIC DNA]</scope>
    <scope>MUTANT CL1136</scope>
    <source>
        <strain>B</strain>
    </source>
</reference>
<reference key="3">
    <citation type="journal article" date="1992" name="J. Bacteriol.">
        <title>Cloning, expression, and nucleotide sequence of a mutant glgC gene from Escherichia coli B.</title>
        <authorList>
            <person name="Meyer C.R."/>
            <person name="Ghosh P."/>
            <person name="Remy E."/>
            <person name="Preiss J."/>
        </authorList>
    </citation>
    <scope>NUCLEOTIDE SEQUENCE [GENOMIC DNA]</scope>
    <scope>MUTANT SG5</scope>
    <source>
        <strain>B</strain>
    </source>
</reference>
<reference key="4">
    <citation type="journal article" date="1993" name="Arch. Biochem. Biophys.">
        <title>Cloning, expression, and sequence of an allosteric mutant ADPglucose pyrophosphorylase from Escherichia coli B.</title>
        <authorList>
            <person name="Meyer C.R."/>
            <person name="Ghosh P."/>
            <person name="Nadler S."/>
            <person name="Preiss J."/>
        </authorList>
    </citation>
    <scope>NUCLEOTIDE SEQUENCE [GENOMIC DNA]</scope>
    <scope>MUTANT SG14</scope>
    <scope>SEQUENCE REVISION TO 295</scope>
    <source>
        <strain>B</strain>
    </source>
</reference>
<reference key="5">
    <citation type="journal article" date="1997" name="Science">
        <title>The complete genome sequence of Escherichia coli K-12.</title>
        <authorList>
            <person name="Blattner F.R."/>
            <person name="Plunkett G. III"/>
            <person name="Bloch C.A."/>
            <person name="Perna N.T."/>
            <person name="Burland V."/>
            <person name="Riley M."/>
            <person name="Collado-Vides J."/>
            <person name="Glasner J.D."/>
            <person name="Rode C.K."/>
            <person name="Mayhew G.F."/>
            <person name="Gregor J."/>
            <person name="Davis N.W."/>
            <person name="Kirkpatrick H.A."/>
            <person name="Goeden M.A."/>
            <person name="Rose D.J."/>
            <person name="Mau B."/>
            <person name="Shao Y."/>
        </authorList>
    </citation>
    <scope>NUCLEOTIDE SEQUENCE [LARGE SCALE GENOMIC DNA]</scope>
    <source>
        <strain>K12 / MG1655 / ATCC 47076</strain>
    </source>
</reference>
<reference key="6">
    <citation type="journal article" date="1989" name="J. Biol. Chem.">
        <title>Biosynthesis of bacterial glycogen. Determination of the amino acid changes that alter the regulatory properties of a mutant Escherichia coli ADP-glucose synthetase.</title>
        <authorList>
            <person name="Kumar A."/>
            <person name="Ghosh P."/>
            <person name="Lee Y.M."/>
            <person name="Hill M.A."/>
            <person name="Preiss J."/>
        </authorList>
    </citation>
    <scope>SEQUENCE REVISION TO 161; 166 AND 189</scope>
    <scope>MUTANT 618</scope>
</reference>
<reference key="7">
    <citation type="journal article" date="2006" name="Mol. Syst. Biol.">
        <title>Highly accurate genome sequences of Escherichia coli K-12 strains MG1655 and W3110.</title>
        <authorList>
            <person name="Hayashi K."/>
            <person name="Morooka N."/>
            <person name="Yamamoto Y."/>
            <person name="Fujita K."/>
            <person name="Isono K."/>
            <person name="Choi S."/>
            <person name="Ohtsubo E."/>
            <person name="Baba T."/>
            <person name="Wanner B.L."/>
            <person name="Mori H."/>
            <person name="Horiuchi T."/>
        </authorList>
    </citation>
    <scope>NUCLEOTIDE SEQUENCE [LARGE SCALE GENOMIC DNA]</scope>
    <source>
        <strain>K12 / W3110 / ATCC 27325 / DSM 5911</strain>
    </source>
</reference>
<reference key="8">
    <citation type="journal article" date="1976" name="J. Biol. Chem.">
        <title>Biosynthesis of bacterial glycogen. Characterization of the subunit structure of Escherichia coli B glucose-1-phosphate adenylyltransferase (EC 2.7.7.27).</title>
        <authorList>
            <person name="Haugen T.H."/>
            <person name="Ishaque A."/>
            <person name="Preiss J."/>
        </authorList>
    </citation>
    <scope>PROTEIN SEQUENCE OF 2-28</scope>
    <scope>SUBUNIT</scope>
</reference>
<reference key="9">
    <citation type="journal article" date="1978" name="J. Biol. Chem.">
        <title>Biosynthesis of bacterial glycogen. Isolation and characterization of the pyridoxal-P allosteric activator site and the ADP-glucose-protected pyridoxal-P binding site of Escherichia coli B ADP-glucose synthase.</title>
        <authorList>
            <person name="Parsons T.F."/>
            <person name="Preiss J."/>
        </authorList>
    </citation>
    <scope>PROTEIN SEQUENCE OF 2-49 AND 183-201</scope>
</reference>
<reference key="10">
    <citation type="journal article" date="1988" name="J. Biol. Chem.">
        <title>Biosynthesis of bacterial glycogen. Use of site-directed mutagenesis to probe the role of tyrosine 114 in the catalytic mechanism of ADP-glucose synthetase from Escherichia coli.</title>
        <authorList>
            <person name="Kumar A."/>
            <person name="Tanaka T."/>
            <person name="Lee Y.M."/>
            <person name="Preiss J."/>
        </authorList>
    </citation>
    <scope>MUTAGENESIS OF TYR-114</scope>
</reference>
<reference key="11">
    <citation type="journal article" date="1990" name="Arch. Biochem. Biophys.">
        <title>Escherichia coli E-39 ADPglucose synthetase has different activation kinetics from the wild-type allosteric enzyme.</title>
        <authorList>
            <person name="Gardiol A."/>
            <person name="Preiss J."/>
        </authorList>
    </citation>
    <scope>ACTIVITY REGULATION</scope>
    <scope>MUTAGENESIS OF LYS-39</scope>
</reference>
<reference key="12">
    <citation type="journal article" date="1991" name="J. Biol. Chem.">
        <title>Biosynthesis of bacterial glycogen. Mutagenesis of a catalytic site residue of ADP-glucose pyrophosphorylase from Escherichia coli.</title>
        <authorList>
            <person name="Hill M.A."/>
            <person name="Kaufmann K."/>
            <person name="Otero J."/>
            <person name="Preiss J."/>
        </authorList>
    </citation>
    <scope>FUNCTION</scope>
    <scope>CATALYTIC ACTIVITY</scope>
    <scope>BIOPHYSICOCHEMICAL PROPERTIES</scope>
    <scope>MUTAGENESIS OF LYS-195</scope>
    <scope>ACTIVITY REGULATION</scope>
    <source>
        <strain>K12</strain>
    </source>
</reference>
<reference key="13">
    <citation type="journal article" date="1995" name="J. Bacteriol.">
        <title>The product of the pleiotropic Escherichia coli gene csrA modulates glycogen biosynthesis via effects on mRNA stability.</title>
        <authorList>
            <person name="Liu M.Y."/>
            <person name="Yang H."/>
            <person name="Romeo T."/>
        </authorList>
    </citation>
    <scope>INDUCTION</scope>
    <source>
        <strain>K12 / BW3414</strain>
    </source>
</reference>
<reference key="14">
    <citation type="journal article" date="2011" name="Biochimie">
        <title>Understanding the allosteric trigger for the fructose-1,6-bisphosphate regulation of the ADP-glucose pyrophosphorylase from Escherichia coli.</title>
        <authorList>
            <person name="Figueroa C.M."/>
            <person name="Esper M.C."/>
            <person name="Bertolo A."/>
            <person name="Demonte A.M."/>
            <person name="Aleanzi M."/>
            <person name="Iglesias A.A."/>
            <person name="Ballicora M.A."/>
        </authorList>
    </citation>
    <scope>ACTIVITY REGULATION</scope>
    <scope>MUTAGENESIS OF GLN-74 AND TRP-113</scope>
</reference>
<reference key="15">
    <citation type="journal article" date="2016" name="Structure">
        <title>Structural basis of glycogen biosynthesis regulation in bacteria.</title>
        <authorList>
            <person name="Cifuente J.O."/>
            <person name="Comino N."/>
            <person name="Madariaga-Marcos J."/>
            <person name="Lopez-Fernandez S."/>
            <person name="Garcia-Alija M."/>
            <person name="Agirre J."/>
            <person name="Albesa-Jove D."/>
            <person name="Guerin M.E."/>
        </authorList>
    </citation>
    <scope>X-RAY CRYSTALLOGRAPHY (2.67 ANGSTROMS) IN COMPLEX WITH FRUCTOSE-1,6-BISPHOSPHATE; AMP AND SUBSTRATE ANALOG</scope>
    <scope>SUBUNIT</scope>
    <scope>REACTION MECHANISM</scope>
</reference>
<protein>
    <recommendedName>
        <fullName evidence="16">Glucose-1-phosphate adenylyltransferase</fullName>
        <ecNumber evidence="3">2.7.7.27</ecNumber>
    </recommendedName>
    <alternativeName>
        <fullName evidence="15">ADP-glucose pyrophosphorylase</fullName>
        <shortName evidence="14">ADPGlc PPase</shortName>
    </alternativeName>
    <alternativeName>
        <fullName evidence="13">ADP-glucose synthase</fullName>
    </alternativeName>
</protein>
<comment type="function">
    <text evidence="3">Involved in the biosynthesis of ADP-glucose, a building block required for the elongation reactions to produce glycogen. Catalyzes the reaction between ATP and alpha-D-glucose 1-phosphate (G1P) to produce pyrophosphate and ADP-Glc.</text>
</comment>
<comment type="catalytic activity">
    <reaction evidence="3">
        <text>alpha-D-glucose 1-phosphate + ATP + H(+) = ADP-alpha-D-glucose + diphosphate</text>
        <dbReference type="Rhea" id="RHEA:12120"/>
        <dbReference type="ChEBI" id="CHEBI:15378"/>
        <dbReference type="ChEBI" id="CHEBI:30616"/>
        <dbReference type="ChEBI" id="CHEBI:33019"/>
        <dbReference type="ChEBI" id="CHEBI:57498"/>
        <dbReference type="ChEBI" id="CHEBI:58601"/>
        <dbReference type="EC" id="2.7.7.27"/>
    </reaction>
</comment>
<comment type="activity regulation">
    <text evidence="3 4 5">Allosterically activated by fructose-1,6-bisphosphate (F16BP), hexanediol 1,6-bisphosphate, NADPH and pyridoxal phosphate. Inhibited by AMP and by high concentrations of MgCl(2).</text>
</comment>
<comment type="biophysicochemical properties">
    <kinetics>
        <KM evidence="3">25 uM for alpha-D-glucose 1-phosphate</KM>
        <KM evidence="3">120 uM for diphosphate</KM>
        <Vmax evidence="3">133.0 umol/min/mg enzyme toward alpha-D-glucose 1-phosphate</Vmax>
        <Vmax evidence="3">97.0 umol/min/mg enzyme toward diphosphate</Vmax>
        <text evidence="3">kcat is 111 sec(-1) for adenylyltransferase activity. kcat is 81 sec(-1) for pyrophosphorylase activity.</text>
    </kinetics>
</comment>
<comment type="pathway">
    <text evidence="16">Glycan biosynthesis; glycogen biosynthesis.</text>
</comment>
<comment type="subunit">
    <text evidence="7 11">Homotetramer; dimer of dimers.</text>
</comment>
<comment type="induction">
    <text evidence="10">mRNA stability is at least partially under the control of CsrA; loss of csrA leads to higher transcript levels, possibly mediated by protein binding to the mRNA (PubMed:7751274).</text>
</comment>
<comment type="miscellaneous">
    <text evidence="7">Displays cooperative behavior and a bibi mechanism with sequential binding of ATP and G1P, followed by ordered release of pyrophosphate and ADP-Glc.</text>
</comment>
<comment type="similarity">
    <text evidence="16">Belongs to the bacterial/plant glucose-1-phosphate adenylyltransferase family.</text>
</comment>
<organism>
    <name type="scientific">Escherichia coli (strain K12)</name>
    <dbReference type="NCBI Taxonomy" id="83333"/>
    <lineage>
        <taxon>Bacteria</taxon>
        <taxon>Pseudomonadati</taxon>
        <taxon>Pseudomonadota</taxon>
        <taxon>Gammaproteobacteria</taxon>
        <taxon>Enterobacterales</taxon>
        <taxon>Enterobacteriaceae</taxon>
        <taxon>Escherichia</taxon>
    </lineage>
</organism>
<keyword id="KW-0002">3D-structure</keyword>
<keyword id="KW-0021">Allosteric enzyme</keyword>
<keyword id="KW-0067">ATP-binding</keyword>
<keyword id="KW-0119">Carbohydrate metabolism</keyword>
<keyword id="KW-0903">Direct protein sequencing</keyword>
<keyword id="KW-0320">Glycogen biosynthesis</keyword>
<keyword id="KW-0321">Glycogen metabolism</keyword>
<keyword id="KW-0547">Nucleotide-binding</keyword>
<keyword id="KW-0548">Nucleotidyltransferase</keyword>
<keyword id="KW-1185">Reference proteome</keyword>
<keyword id="KW-0808">Transferase</keyword>
<feature type="initiator methionine" description="Removed" evidence="9 11">
    <location>
        <position position="1"/>
    </location>
</feature>
<feature type="chain" id="PRO_0000195294" description="Glucose-1-phosphate adenylyltransferase">
    <location>
        <begin position="2"/>
        <end position="431"/>
    </location>
</feature>
<feature type="binding site" evidence="7 18">
    <location>
        <position position="39"/>
    </location>
    <ligand>
        <name>beta-D-fructose 1,6-bisphosphate</name>
        <dbReference type="ChEBI" id="CHEBI:32966"/>
    </ligand>
</feature>
<feature type="binding site" evidence="7">
    <location>
        <position position="40"/>
    </location>
    <ligand>
        <name>AMP</name>
        <dbReference type="ChEBI" id="CHEBI:456215"/>
    </ligand>
</feature>
<feature type="binding site" evidence="7">
    <location>
        <position position="46"/>
    </location>
    <ligand>
        <name>AMP</name>
        <dbReference type="ChEBI" id="CHEBI:456215"/>
    </ligand>
</feature>
<feature type="binding site" evidence="7">
    <location>
        <position position="52"/>
    </location>
    <ligand>
        <name>AMP</name>
        <dbReference type="ChEBI" id="CHEBI:456215"/>
    </ligand>
</feature>
<feature type="binding site" evidence="21">
    <location>
        <position position="114"/>
    </location>
    <ligand>
        <name>alpha-D-glucose 1-phosphate</name>
        <dbReference type="ChEBI" id="CHEBI:58601"/>
    </ligand>
</feature>
<feature type="binding site" evidence="7">
    <location>
        <position position="130"/>
    </location>
    <ligand>
        <name>AMP</name>
        <dbReference type="ChEBI" id="CHEBI:456215"/>
    </ligand>
</feature>
<feature type="binding site" evidence="20">
    <location>
        <position position="179"/>
    </location>
    <ligand>
        <name>alpha-D-glucose 1-phosphate</name>
        <dbReference type="ChEBI" id="CHEBI:58601"/>
    </ligand>
</feature>
<feature type="binding site" evidence="17 20">
    <location>
        <begin position="194"/>
        <end position="195"/>
    </location>
    <ligand>
        <name>alpha-D-glucose 1-phosphate</name>
        <dbReference type="ChEBI" id="CHEBI:58601"/>
    </ligand>
</feature>
<feature type="binding site" evidence="20">
    <location>
        <position position="212"/>
    </location>
    <ligand>
        <name>alpha-D-glucose 1-phosphate</name>
        <dbReference type="ChEBI" id="CHEBI:58601"/>
    </ligand>
</feature>
<feature type="binding site" evidence="7">
    <location>
        <position position="370"/>
    </location>
    <ligand>
        <name>AMP</name>
        <dbReference type="ChEBI" id="CHEBI:456215"/>
    </ligand>
</feature>
<feature type="binding site" evidence="7">
    <location>
        <position position="386"/>
    </location>
    <ligand>
        <name>AMP</name>
        <dbReference type="ChEBI" id="CHEBI:456215"/>
    </ligand>
</feature>
<feature type="binding site" evidence="7">
    <location>
        <begin position="419"/>
        <end position="423"/>
    </location>
    <ligand>
        <name>beta-D-fructose 1,6-bisphosphate</name>
        <dbReference type="ChEBI" id="CHEBI:32966"/>
    </ligand>
</feature>
<feature type="binding site" evidence="7">
    <location>
        <begin position="429"/>
        <end position="431"/>
    </location>
    <ligand>
        <name>beta-D-fructose 1,6-bisphosphate</name>
        <dbReference type="ChEBI" id="CHEBI:32966"/>
    </ligand>
</feature>
<feature type="site" description="Could play a key role in the communication between the regulatory and the substrate sites" evidence="19">
    <location>
        <position position="74"/>
    </location>
</feature>
<feature type="site" description="Could play a key role in the communication between the regulatory and the substrate sites" evidence="19">
    <location>
        <position position="113"/>
    </location>
</feature>
<feature type="sequence variant" description="In SG14 mutant; lower apparent affinities for substrates, fructose-1,6-bisphosphate and AMP." evidence="12">
    <original>A</original>
    <variation>T</variation>
    <location>
        <position position="44"/>
    </location>
</feature>
<feature type="sequence variant" description="In CL1136 mutant; less dependent on the allosteric activator, fructose-1,6-bisphosphate, for activity and less sensitive to inhibition by AMP." evidence="2">
    <original>R</original>
    <variation>C</variation>
    <location>
        <position position="67"/>
    </location>
</feature>
<feature type="sequence variant" description="In SG5 mutant." evidence="1">
    <original>P</original>
    <variation>S</variation>
    <location>
        <position position="295"/>
    </location>
</feature>
<feature type="sequence variant" description="In 618 mutant; causes lowered affinity for AMP." evidence="6">
    <original>G</original>
    <variation>D</variation>
    <location>
        <position position="336"/>
    </location>
</feature>
<feature type="mutagenesis site" description="The level of activation by pyridoxal phosphate and fructose-1,6-phosphate is only approximately 2-fold compared to activation of 15- to 28-fold respectively, for the wild-type. NADPH is unable to activate the mutant enzyme." evidence="4">
    <original>K</original>
    <variation>E</variation>
    <location>
        <position position="39"/>
    </location>
</feature>
<feature type="mutagenesis site" description="Insensitive to activation by fructose-1,6-bisphosphate, but still binds fructose-1,6-bisphosphate with similar affinity as the wild-type. AMP causes similar inhibition on the wild-type and mutant." evidence="5">
    <original>Q</original>
    <variation>A</variation>
    <location>
        <position position="74"/>
    </location>
</feature>
<feature type="mutagenesis site" description="Insensitive to activation by fructose-1,6-bisphosphate." evidence="5">
    <original>Q</original>
    <variation>E</variation>
    <location>
        <position position="74"/>
    </location>
</feature>
<feature type="mutagenesis site" description="The enzyme is activated 35-fold by fructose-1,6-bisphosphate." evidence="5">
    <original>Q</original>
    <variation>N</variation>
    <location>
        <position position="74"/>
    </location>
</feature>
<feature type="mutagenesis site" description="Insensitive to activation by fructose-1,6-bisphosphate, but still binds fructose-1,6-bisphosphate, with similar affinity as the wild-type. AMP causes similar inhibition on the wild-type and mutant." evidence="5">
    <original>W</original>
    <variation>A</variation>
    <location>
        <position position="113"/>
    </location>
</feature>
<feature type="mutagenesis site" description="The enzyme is activated only 3-fold by fructose-1,6-bisphosphate." evidence="5">
    <original>W</original>
    <variation>L</variation>
    <location>
        <position position="113"/>
    </location>
</feature>
<feature type="mutagenesis site" description="The enzyme is activated 15-fold by fructose-1,6-bisphosphate." evidence="5">
    <original>W</original>
    <variation>Y</variation>
    <location>
        <position position="113"/>
    </location>
</feature>
<feature type="mutagenesis site" description="Shows a decrease of affinity for the substrates and less than 2-fold activation by fructose 1,6-bisphosphate in the ADP-glucose synthesis direction. In contrast, in the pyrophosphorolysis direction, the mutant shoqws about a 30-fold activation by fructose 1,6-bisphosphate." evidence="8">
    <original>Y</original>
    <variation>F</variation>
    <location>
        <position position="114"/>
    </location>
</feature>
<feature type="mutagenesis site" description="Decrease of the affinity for alpha-D-glucose 1-phosphate, but no loss in adenylyltransferase activity." evidence="3">
    <original>K</original>
    <variation>E</variation>
    <variation>I</variation>
    <variation>H</variation>
    <variation>R</variation>
    <location>
        <position position="195"/>
    </location>
</feature>
<feature type="mutagenesis site" description="600-fold decrease of the affinity for alpha-D-glucose 1-phosphate compared to the wild-type. In contrast, kinetic constants for ATP, magnesium and fructose-1,6-bisphosphate are similar in mutant and wild-type cases. The catalytic efficiency is 2-fold lower in the mutant." evidence="3">
    <original>K</original>
    <variation>Q</variation>
    <location>
        <position position="195"/>
    </location>
</feature>
<feature type="sequence conflict" description="In Ref. 3; CAA23544/AAA98736/AAA23873." evidence="16" ref="3">
    <original>A</original>
    <variation>V</variation>
    <location>
        <position position="161"/>
    </location>
</feature>
<feature type="sequence conflict" description="In Ref. 3; CAA23544/AAA98736/AAA23873." evidence="16" ref="3">
    <original>A</original>
    <variation>V</variation>
    <location>
        <position position="166"/>
    </location>
</feature>
<feature type="sequence conflict" description="In Ref. 3; CAA23544/AAA98736/AAA23873." evidence="16" ref="3">
    <original>I</original>
    <variation>T</variation>
    <location>
        <position position="189"/>
    </location>
</feature>
<feature type="sequence conflict" description="In Ref. 3; CAA23544/AAA98736." evidence="16" ref="3">
    <original>E</original>
    <variation>K</variation>
    <location>
        <position position="296"/>
    </location>
</feature>
<feature type="helix" evidence="23">
    <location>
        <begin position="12"/>
        <end position="18"/>
    </location>
</feature>
<feature type="strand" evidence="23">
    <location>
        <begin position="20"/>
        <end position="25"/>
    </location>
</feature>
<feature type="turn" evidence="24">
    <location>
        <begin position="31"/>
        <end position="33"/>
    </location>
</feature>
<feature type="helix" evidence="23">
    <location>
        <begin position="34"/>
        <end position="37"/>
    </location>
</feature>
<feature type="strand" evidence="23">
    <location>
        <begin position="38"/>
        <end position="40"/>
    </location>
</feature>
<feature type="helix" evidence="23">
    <location>
        <begin position="42"/>
        <end position="44"/>
    </location>
</feature>
<feature type="strand" evidence="25">
    <location>
        <begin position="45"/>
        <end position="47"/>
    </location>
</feature>
<feature type="turn" evidence="23">
    <location>
        <begin position="48"/>
        <end position="50"/>
    </location>
</feature>
<feature type="helix" evidence="23">
    <location>
        <begin position="54"/>
        <end position="63"/>
    </location>
</feature>
<feature type="strand" evidence="23">
    <location>
        <begin position="68"/>
        <end position="75"/>
    </location>
</feature>
<feature type="helix" evidence="23">
    <location>
        <begin position="78"/>
        <end position="87"/>
    </location>
</feature>
<feature type="helix" evidence="23">
    <location>
        <begin position="93"/>
        <end position="95"/>
    </location>
</feature>
<feature type="strand" evidence="23">
    <location>
        <begin position="98"/>
        <end position="103"/>
    </location>
</feature>
<feature type="strand" evidence="23">
    <location>
        <begin position="108"/>
        <end position="110"/>
    </location>
</feature>
<feature type="helix" evidence="23">
    <location>
        <begin position="117"/>
        <end position="123"/>
    </location>
</feature>
<feature type="helix" evidence="23">
    <location>
        <begin position="125"/>
        <end position="130"/>
    </location>
</feature>
<feature type="strand" evidence="23">
    <location>
        <begin position="134"/>
        <end position="140"/>
    </location>
</feature>
<feature type="strand" evidence="25">
    <location>
        <begin position="142"/>
        <end position="144"/>
    </location>
</feature>
<feature type="helix" evidence="23">
    <location>
        <begin position="149"/>
        <end position="158"/>
    </location>
</feature>
<feature type="strand" evidence="23">
    <location>
        <begin position="162"/>
        <end position="171"/>
    </location>
</feature>
<feature type="helix" evidence="23">
    <location>
        <begin position="172"/>
        <end position="177"/>
    </location>
</feature>
<feature type="strand" evidence="23">
    <location>
        <begin position="178"/>
        <end position="183"/>
    </location>
</feature>
<feature type="strand" evidence="23">
    <location>
        <begin position="187"/>
        <end position="195"/>
    </location>
</feature>
<feature type="strand" evidence="23">
    <location>
        <begin position="208"/>
        <end position="219"/>
    </location>
</feature>
<feature type="helix" evidence="23">
    <location>
        <begin position="220"/>
        <end position="232"/>
    </location>
</feature>
<feature type="strand" evidence="22">
    <location>
        <begin position="233"/>
        <end position="235"/>
    </location>
</feature>
<feature type="turn" evidence="23">
    <location>
        <begin position="240"/>
        <end position="243"/>
    </location>
</feature>
<feature type="helix" evidence="23">
    <location>
        <begin position="244"/>
        <end position="250"/>
    </location>
</feature>
<feature type="strand" evidence="23">
    <location>
        <begin position="254"/>
        <end position="258"/>
    </location>
</feature>
<feature type="helix" evidence="23">
    <location>
        <begin position="259"/>
        <end position="261"/>
    </location>
</feature>
<feature type="helix" evidence="23">
    <location>
        <begin position="280"/>
        <end position="289"/>
    </location>
</feature>
<feature type="strand" evidence="23">
    <location>
        <begin position="292"/>
        <end position="294"/>
    </location>
</feature>
<feature type="strand" evidence="25">
    <location>
        <begin position="302"/>
        <end position="304"/>
    </location>
</feature>
<feature type="strand" evidence="23">
    <location>
        <begin position="316"/>
        <end position="319"/>
    </location>
</feature>
<feature type="strand" evidence="23">
    <location>
        <begin position="327"/>
        <end position="334"/>
    </location>
</feature>
<feature type="strand" evidence="23">
    <location>
        <begin position="339"/>
        <end position="342"/>
    </location>
</feature>
<feature type="strand" evidence="23">
    <location>
        <begin position="344"/>
        <end position="347"/>
    </location>
</feature>
<feature type="strand" evidence="23">
    <location>
        <begin position="361"/>
        <end position="367"/>
    </location>
</feature>
<feature type="strand" evidence="23">
    <location>
        <begin position="378"/>
        <end position="384"/>
    </location>
</feature>
<feature type="strand" evidence="23">
    <location>
        <begin position="395"/>
        <end position="398"/>
    </location>
</feature>
<feature type="helix" evidence="23">
    <location>
        <begin position="400"/>
        <end position="406"/>
    </location>
</feature>
<feature type="strand" evidence="23">
    <location>
        <begin position="407"/>
        <end position="409"/>
    </location>
</feature>
<feature type="strand" evidence="24">
    <location>
        <begin position="411"/>
        <end position="413"/>
    </location>
</feature>
<feature type="strand" evidence="23">
    <location>
        <begin position="415"/>
        <end position="417"/>
    </location>
</feature>
<feature type="helix" evidence="23">
    <location>
        <begin position="419"/>
        <end position="424"/>
    </location>
</feature>
<name>GLGC_ECOLI</name>
<gene>
    <name type="primary">glgC</name>
    <name type="ordered locus">b3430</name>
    <name type="ordered locus">JW3393</name>
</gene>
<accession>P0A6V1</accession>
<accession>P00584</accession>
<accession>Q2M794</accession>
<dbReference type="EC" id="2.7.7.27" evidence="3"/>
<dbReference type="EMBL" id="V00281">
    <property type="protein sequence ID" value="CAA23544.1"/>
    <property type="molecule type" value="Genomic_DNA"/>
</dbReference>
<dbReference type="EMBL" id="J01616">
    <property type="protein sequence ID" value="AAA98736.1"/>
    <property type="molecule type" value="Genomic_DNA"/>
</dbReference>
<dbReference type="EMBL" id="M97226">
    <property type="protein sequence ID" value="AAA23873.1"/>
    <property type="molecule type" value="Genomic_DNA"/>
</dbReference>
<dbReference type="EMBL" id="S58224">
    <property type="protein sequence ID" value="AAB26162.1"/>
    <property type="molecule type" value="Genomic_DNA"/>
</dbReference>
<dbReference type="EMBL" id="U18997">
    <property type="protein sequence ID" value="AAA58228.1"/>
    <property type="molecule type" value="Genomic_DNA"/>
</dbReference>
<dbReference type="EMBL" id="U00096">
    <property type="protein sequence ID" value="AAC76455.1"/>
    <property type="molecule type" value="Genomic_DNA"/>
</dbReference>
<dbReference type="EMBL" id="AP009048">
    <property type="protein sequence ID" value="BAE77862.1"/>
    <property type="molecule type" value="Genomic_DNA"/>
</dbReference>
<dbReference type="PIR" id="A00721">
    <property type="entry name" value="YUEC"/>
</dbReference>
<dbReference type="RefSeq" id="NP_417888.1">
    <property type="nucleotide sequence ID" value="NC_000913.3"/>
</dbReference>
<dbReference type="RefSeq" id="WP_000253975.1">
    <property type="nucleotide sequence ID" value="NZ_STEB01000004.1"/>
</dbReference>
<dbReference type="PDB" id="5L6S">
    <property type="method" value="X-ray"/>
    <property type="resolution" value="3.04 A"/>
    <property type="chains" value="A/B/C/D/E/F/G/H/I/J/K/L/M/N/O/P=1-431"/>
</dbReference>
<dbReference type="PDB" id="5L6V">
    <property type="method" value="X-ray"/>
    <property type="resolution" value="2.67 A"/>
    <property type="chains" value="A/B/C/D/E/F/G/H/I/J/K/L/M/N/O/P=1-431"/>
</dbReference>
<dbReference type="PDB" id="5MNI">
    <property type="method" value="X-ray"/>
    <property type="resolution" value="3.09 A"/>
    <property type="chains" value="A/B/C/D/E/F/G/H=1-431"/>
</dbReference>
<dbReference type="PDB" id="6R8B">
    <property type="method" value="EM"/>
    <property type="resolution" value="3.10 A"/>
    <property type="chains" value="A/B/C/D=1-431"/>
</dbReference>
<dbReference type="PDB" id="6R8U">
    <property type="method" value="EM"/>
    <property type="resolution" value="3.00 A"/>
    <property type="chains" value="A/B/C/D=1-431"/>
</dbReference>
<dbReference type="PDB" id="6SHJ">
    <property type="method" value="EM"/>
    <property type="resolution" value="3.20 A"/>
    <property type="chains" value="A/B/C/D=1-431"/>
</dbReference>
<dbReference type="PDB" id="6SHN">
    <property type="method" value="EM"/>
    <property type="resolution" value="3.30 A"/>
    <property type="chains" value="A/B/C/D=1-431"/>
</dbReference>
<dbReference type="PDB" id="6SHQ">
    <property type="method" value="EM"/>
    <property type="resolution" value="3.20 A"/>
    <property type="chains" value="A/B/C/D=1-431"/>
</dbReference>
<dbReference type="PDB" id="6SI8">
    <property type="method" value="EM"/>
    <property type="resolution" value="3.40 A"/>
    <property type="chains" value="A/B/C/D=1-431"/>
</dbReference>
<dbReference type="PDBsum" id="5L6S"/>
<dbReference type="PDBsum" id="5L6V"/>
<dbReference type="PDBsum" id="5MNI"/>
<dbReference type="PDBsum" id="6R8B"/>
<dbReference type="PDBsum" id="6R8U"/>
<dbReference type="PDBsum" id="6SHJ"/>
<dbReference type="PDBsum" id="6SHN"/>
<dbReference type="PDBsum" id="6SHQ"/>
<dbReference type="PDBsum" id="6SI8"/>
<dbReference type="EMDB" id="EMD-10199"/>
<dbReference type="EMDB" id="EMD-10201"/>
<dbReference type="EMDB" id="EMD-10203"/>
<dbReference type="EMDB" id="EMD-10208"/>
<dbReference type="EMDB" id="EMD-4754"/>
<dbReference type="EMDB" id="EMD-4761"/>
<dbReference type="SMR" id="P0A6V1"/>
<dbReference type="BioGRID" id="4262502">
    <property type="interactions" value="301"/>
</dbReference>
<dbReference type="BioGRID" id="852251">
    <property type="interactions" value="1"/>
</dbReference>
<dbReference type="DIP" id="DIP-48147N"/>
<dbReference type="FunCoup" id="P0A6V1">
    <property type="interactions" value="255"/>
</dbReference>
<dbReference type="IntAct" id="P0A6V1">
    <property type="interactions" value="6"/>
</dbReference>
<dbReference type="STRING" id="511145.b3430"/>
<dbReference type="jPOST" id="P0A6V1"/>
<dbReference type="PaxDb" id="511145-b3430"/>
<dbReference type="EnsemblBacteria" id="AAC76455">
    <property type="protein sequence ID" value="AAC76455"/>
    <property type="gene ID" value="b3430"/>
</dbReference>
<dbReference type="GeneID" id="93778559"/>
<dbReference type="GeneID" id="947942"/>
<dbReference type="KEGG" id="ecj:JW3393"/>
<dbReference type="KEGG" id="eco:b3430"/>
<dbReference type="KEGG" id="ecoc:C3026_18595"/>
<dbReference type="PATRIC" id="fig|511145.12.peg.3527"/>
<dbReference type="EchoBASE" id="EB0374"/>
<dbReference type="eggNOG" id="COG0448">
    <property type="taxonomic scope" value="Bacteria"/>
</dbReference>
<dbReference type="HOGENOM" id="CLU_029499_14_1_6"/>
<dbReference type="InParanoid" id="P0A6V1"/>
<dbReference type="OMA" id="YPLTKMR"/>
<dbReference type="OrthoDB" id="9801810at2"/>
<dbReference type="PhylomeDB" id="P0A6V1"/>
<dbReference type="BioCyc" id="EcoCyc:GLUC1PADENYLTRANS-MONOMER"/>
<dbReference type="BioCyc" id="MetaCyc:GLUC1PADENYLTRANS-MONOMER"/>
<dbReference type="BRENDA" id="2.7.7.27">
    <property type="organism ID" value="2026"/>
</dbReference>
<dbReference type="UniPathway" id="UPA00164"/>
<dbReference type="PRO" id="PR:P0A6V1"/>
<dbReference type="Proteomes" id="UP000000625">
    <property type="component" value="Chromosome"/>
</dbReference>
<dbReference type="GO" id="GO:0010170">
    <property type="term" value="C:glucose-1-phosphate adenylyltransferase complex"/>
    <property type="evidence" value="ECO:0000314"/>
    <property type="project" value="EcoCyc"/>
</dbReference>
<dbReference type="GO" id="GO:0016208">
    <property type="term" value="F:AMP binding"/>
    <property type="evidence" value="ECO:0000314"/>
    <property type="project" value="EcoCyc"/>
</dbReference>
<dbReference type="GO" id="GO:0005524">
    <property type="term" value="F:ATP binding"/>
    <property type="evidence" value="ECO:0007669"/>
    <property type="project" value="UniProtKB-KW"/>
</dbReference>
<dbReference type="GO" id="GO:0008878">
    <property type="term" value="F:glucose-1-phosphate adenylyltransferase activity"/>
    <property type="evidence" value="ECO:0000314"/>
    <property type="project" value="EcoCyc"/>
</dbReference>
<dbReference type="GO" id="GO:0042802">
    <property type="term" value="F:identical protein binding"/>
    <property type="evidence" value="ECO:0000314"/>
    <property type="project" value="EcoCyc"/>
</dbReference>
<dbReference type="GO" id="GO:0000287">
    <property type="term" value="F:magnesium ion binding"/>
    <property type="evidence" value="ECO:0000314"/>
    <property type="project" value="EcoCyc"/>
</dbReference>
<dbReference type="GO" id="GO:0005978">
    <property type="term" value="P:glycogen biosynthetic process"/>
    <property type="evidence" value="ECO:0000315"/>
    <property type="project" value="EcoCyc"/>
</dbReference>
<dbReference type="GO" id="GO:0051289">
    <property type="term" value="P:protein homotetramerization"/>
    <property type="evidence" value="ECO:0000314"/>
    <property type="project" value="EcoCyc"/>
</dbReference>
<dbReference type="CDD" id="cd02508">
    <property type="entry name" value="ADP_Glucose_PP"/>
    <property type="match status" value="1"/>
</dbReference>
<dbReference type="CDD" id="cd04651">
    <property type="entry name" value="LbH_G1P_AT_C"/>
    <property type="match status" value="1"/>
</dbReference>
<dbReference type="FunFam" id="2.160.10.10:FF:000006">
    <property type="entry name" value="Glucose-1-phosphate adenylyltransferase"/>
    <property type="match status" value="1"/>
</dbReference>
<dbReference type="FunFam" id="3.90.550.10:FF:000014">
    <property type="entry name" value="Glucose-1-phosphate adenylyltransferase"/>
    <property type="match status" value="1"/>
</dbReference>
<dbReference type="Gene3D" id="2.160.10.10">
    <property type="entry name" value="Hexapeptide repeat proteins"/>
    <property type="match status" value="1"/>
</dbReference>
<dbReference type="Gene3D" id="3.90.550.10">
    <property type="entry name" value="Spore Coat Polysaccharide Biosynthesis Protein SpsA, Chain A"/>
    <property type="match status" value="1"/>
</dbReference>
<dbReference type="HAMAP" id="MF_00624">
    <property type="entry name" value="GlgC"/>
    <property type="match status" value="1"/>
</dbReference>
<dbReference type="InterPro" id="IPR011831">
    <property type="entry name" value="ADP-Glc_PPase"/>
</dbReference>
<dbReference type="InterPro" id="IPR005836">
    <property type="entry name" value="ADP_Glu_pyroP_CS"/>
</dbReference>
<dbReference type="InterPro" id="IPR023049">
    <property type="entry name" value="GlgC_bac"/>
</dbReference>
<dbReference type="InterPro" id="IPR056818">
    <property type="entry name" value="GlmU/GlgC-like_hexapep"/>
</dbReference>
<dbReference type="InterPro" id="IPR005835">
    <property type="entry name" value="NTP_transferase_dom"/>
</dbReference>
<dbReference type="InterPro" id="IPR029044">
    <property type="entry name" value="Nucleotide-diphossugar_trans"/>
</dbReference>
<dbReference type="InterPro" id="IPR011004">
    <property type="entry name" value="Trimer_LpxA-like_sf"/>
</dbReference>
<dbReference type="NCBIfam" id="TIGR02091">
    <property type="entry name" value="glgC"/>
    <property type="match status" value="1"/>
</dbReference>
<dbReference type="NCBIfam" id="NF001947">
    <property type="entry name" value="PRK00725.1"/>
    <property type="match status" value="1"/>
</dbReference>
<dbReference type="NCBIfam" id="NF002023">
    <property type="entry name" value="PRK00844.1"/>
    <property type="match status" value="1"/>
</dbReference>
<dbReference type="PANTHER" id="PTHR43523:SF2">
    <property type="entry name" value="GLUCOSE-1-PHOSPHATE ADENYLYLTRANSFERASE"/>
    <property type="match status" value="1"/>
</dbReference>
<dbReference type="PANTHER" id="PTHR43523">
    <property type="entry name" value="GLUCOSE-1-PHOSPHATE ADENYLYLTRANSFERASE-RELATED"/>
    <property type="match status" value="1"/>
</dbReference>
<dbReference type="Pfam" id="PF24894">
    <property type="entry name" value="Hexapep_GlmU"/>
    <property type="match status" value="1"/>
</dbReference>
<dbReference type="Pfam" id="PF00483">
    <property type="entry name" value="NTP_transferase"/>
    <property type="match status" value="1"/>
</dbReference>
<dbReference type="SUPFAM" id="SSF53448">
    <property type="entry name" value="Nucleotide-diphospho-sugar transferases"/>
    <property type="match status" value="1"/>
</dbReference>
<dbReference type="SUPFAM" id="SSF51161">
    <property type="entry name" value="Trimeric LpxA-like enzymes"/>
    <property type="match status" value="1"/>
</dbReference>
<dbReference type="PROSITE" id="PS00808">
    <property type="entry name" value="ADP_GLC_PYROPHOSPH_1"/>
    <property type="match status" value="1"/>
</dbReference>
<dbReference type="PROSITE" id="PS00809">
    <property type="entry name" value="ADP_GLC_PYROPHOSPH_2"/>
    <property type="match status" value="1"/>
</dbReference>
<dbReference type="PROSITE" id="PS00810">
    <property type="entry name" value="ADP_GLC_PYROPHOSPH_3"/>
    <property type="match status" value="1"/>
</dbReference>
<sequence>MVSLEKNDHLMLARQLPLKSVALILAGGRGTRLKDLTNKRAKPAVHFGGKFRIIDFALSNCINSGIRRMGVITQYQSHTLVQHIQRGWSFFNEEMNEFVDLLPAQQRMKGENWYRGTADAVTQNLDIIRRYKAEYVVILAGDHIYKQDYSRMLIDHVEKGARCTVACMPVPIEEASAFGVMAVDENDKIIEFVEKPANPPSMPNDPSKSLASMGIYVFDADYLYELLEEDDRDENSSHDFGKDLIPKITEAGLAYAHPFPLSCVQSDPDAEPYWRDVGTLEAYWKANLDLASVVPELDMYDRNWPIRTYNESLPPAKFVQDRSGSHGMTLNSLVSGGCVISGSVVVQSVLFSRVRVNSFCNIDSAVLLPEVWVGRSCRLRRCVIDRACVIPEGMVIGENAEEDARRFYRSEEGIVLVTREMLRKLGHKQER</sequence>
<evidence type="ECO:0000269" key="1">
    <source>
    </source>
</evidence>
<evidence type="ECO:0000269" key="2">
    <source>
    </source>
</evidence>
<evidence type="ECO:0000269" key="3">
    <source>
    </source>
</evidence>
<evidence type="ECO:0000269" key="4">
    <source>
    </source>
</evidence>
<evidence type="ECO:0000269" key="5">
    <source>
    </source>
</evidence>
<evidence type="ECO:0000269" key="6">
    <source>
    </source>
</evidence>
<evidence type="ECO:0000269" key="7">
    <source>
    </source>
</evidence>
<evidence type="ECO:0000269" key="8">
    <source>
    </source>
</evidence>
<evidence type="ECO:0000269" key="9">
    <source>
    </source>
</evidence>
<evidence type="ECO:0000269" key="10">
    <source>
    </source>
</evidence>
<evidence type="ECO:0000269" key="11">
    <source>
    </source>
</evidence>
<evidence type="ECO:0000269" key="12">
    <source>
    </source>
</evidence>
<evidence type="ECO:0000303" key="13">
    <source>
    </source>
</evidence>
<evidence type="ECO:0000303" key="14">
    <source>
    </source>
</evidence>
<evidence type="ECO:0000303" key="15">
    <source>
    </source>
</evidence>
<evidence type="ECO:0000305" key="16"/>
<evidence type="ECO:0000305" key="17">
    <source>
    </source>
</evidence>
<evidence type="ECO:0000305" key="18">
    <source>
    </source>
</evidence>
<evidence type="ECO:0000305" key="19">
    <source>
    </source>
</evidence>
<evidence type="ECO:0000305" key="20">
    <source>
    </source>
</evidence>
<evidence type="ECO:0000305" key="21">
    <source>
    </source>
</evidence>
<evidence type="ECO:0007829" key="22">
    <source>
        <dbReference type="PDB" id="5L6S"/>
    </source>
</evidence>
<evidence type="ECO:0007829" key="23">
    <source>
        <dbReference type="PDB" id="5L6V"/>
    </source>
</evidence>
<evidence type="ECO:0007829" key="24">
    <source>
        <dbReference type="PDB" id="6R8B"/>
    </source>
</evidence>
<evidence type="ECO:0007829" key="25">
    <source>
        <dbReference type="PDB" id="6R8U"/>
    </source>
</evidence>
<proteinExistence type="evidence at protein level"/>